<dbReference type="EMBL" id="Z49702">
    <property type="protein sequence ID" value="CAA89745.1"/>
    <property type="molecule type" value="Genomic_DNA"/>
</dbReference>
<dbReference type="EMBL" id="BK006946">
    <property type="protein sequence ID" value="DAA10006.1"/>
    <property type="molecule type" value="Genomic_DNA"/>
</dbReference>
<dbReference type="PIR" id="S54570">
    <property type="entry name" value="S54570"/>
</dbReference>
<dbReference type="RefSeq" id="NP_013827.1">
    <property type="nucleotide sequence ID" value="NM_001182609.1"/>
</dbReference>
<dbReference type="PDB" id="1YP5">
    <property type="method" value="X-ray"/>
    <property type="resolution" value="1.68 A"/>
    <property type="chains" value="A=1088-1145"/>
</dbReference>
<dbReference type="PDB" id="1ZUY">
    <property type="method" value="X-ray"/>
    <property type="resolution" value="1.39 A"/>
    <property type="chains" value="A/B=1088-1145"/>
</dbReference>
<dbReference type="PDBsum" id="1YP5"/>
<dbReference type="PDBsum" id="1ZUY"/>
<dbReference type="SMR" id="Q04439"/>
<dbReference type="BioGRID" id="35285">
    <property type="interactions" value="258"/>
</dbReference>
<dbReference type="ComplexPortal" id="CPX-1470">
    <property type="entry name" value="Myosin class I complex, MYO5 variant"/>
</dbReference>
<dbReference type="DIP" id="DIP-2222N"/>
<dbReference type="FunCoup" id="Q04439">
    <property type="interactions" value="386"/>
</dbReference>
<dbReference type="IntAct" id="Q04439">
    <property type="interactions" value="103"/>
</dbReference>
<dbReference type="MINT" id="Q04439"/>
<dbReference type="STRING" id="4932.YMR109W"/>
<dbReference type="MoonDB" id="Q04439">
    <property type="type" value="Predicted"/>
</dbReference>
<dbReference type="CarbonylDB" id="Q04439"/>
<dbReference type="GlyGen" id="Q04439">
    <property type="glycosylation" value="1 site"/>
</dbReference>
<dbReference type="iPTMnet" id="Q04439"/>
<dbReference type="PaxDb" id="4932-YMR109W"/>
<dbReference type="PeptideAtlas" id="Q04439"/>
<dbReference type="EnsemblFungi" id="YMR109W_mRNA">
    <property type="protein sequence ID" value="YMR109W"/>
    <property type="gene ID" value="YMR109W"/>
</dbReference>
<dbReference type="GeneID" id="855136"/>
<dbReference type="KEGG" id="sce:YMR109W"/>
<dbReference type="AGR" id="SGD:S000004715"/>
<dbReference type="SGD" id="S000004715">
    <property type="gene designation" value="MYO5"/>
</dbReference>
<dbReference type="VEuPathDB" id="FungiDB:YMR109W"/>
<dbReference type="eggNOG" id="KOG0162">
    <property type="taxonomic scope" value="Eukaryota"/>
</dbReference>
<dbReference type="GeneTree" id="ENSGT00940000170976"/>
<dbReference type="HOGENOM" id="CLU_000192_7_6_1"/>
<dbReference type="InParanoid" id="Q04439"/>
<dbReference type="OMA" id="NDQENQC"/>
<dbReference type="OrthoDB" id="6108017at2759"/>
<dbReference type="BioCyc" id="YEAST:G3O-32805-MONOMER"/>
<dbReference type="BioGRID-ORCS" id="855136">
    <property type="hits" value="0 hits in 10 CRISPR screens"/>
</dbReference>
<dbReference type="CD-CODE" id="E019EF73">
    <property type="entry name" value="Ede1 condensate"/>
</dbReference>
<dbReference type="CD-CODE" id="E03F929F">
    <property type="entry name" value="Stress granule"/>
</dbReference>
<dbReference type="EvolutionaryTrace" id="Q04439"/>
<dbReference type="PRO" id="PR:Q04439"/>
<dbReference type="Proteomes" id="UP000002311">
    <property type="component" value="Chromosome XIII"/>
</dbReference>
<dbReference type="RNAct" id="Q04439">
    <property type="molecule type" value="protein"/>
</dbReference>
<dbReference type="GO" id="GO:0030479">
    <property type="term" value="C:actin cortical patch"/>
    <property type="evidence" value="ECO:0000314"/>
    <property type="project" value="ComplexPortal"/>
</dbReference>
<dbReference type="GO" id="GO:0015629">
    <property type="term" value="C:actin cytoskeleton"/>
    <property type="evidence" value="ECO:0000318"/>
    <property type="project" value="GO_Central"/>
</dbReference>
<dbReference type="GO" id="GO:0071944">
    <property type="term" value="C:cell periphery"/>
    <property type="evidence" value="ECO:0007005"/>
    <property type="project" value="SGD"/>
</dbReference>
<dbReference type="GO" id="GO:0051286">
    <property type="term" value="C:cell tip"/>
    <property type="evidence" value="ECO:0000318"/>
    <property type="project" value="GO_Central"/>
</dbReference>
<dbReference type="GO" id="GO:0005933">
    <property type="term" value="C:cellular bud"/>
    <property type="evidence" value="ECO:0007005"/>
    <property type="project" value="SGD"/>
</dbReference>
<dbReference type="GO" id="GO:0005737">
    <property type="term" value="C:cytoplasm"/>
    <property type="evidence" value="ECO:0000318"/>
    <property type="project" value="GO_Central"/>
</dbReference>
<dbReference type="GO" id="GO:0043332">
    <property type="term" value="C:mating projection tip"/>
    <property type="evidence" value="ECO:0007005"/>
    <property type="project" value="SGD"/>
</dbReference>
<dbReference type="GO" id="GO:0045160">
    <property type="term" value="C:myosin I complex"/>
    <property type="evidence" value="ECO:0000353"/>
    <property type="project" value="ComplexPortal"/>
</dbReference>
<dbReference type="GO" id="GO:0005886">
    <property type="term" value="C:plasma membrane"/>
    <property type="evidence" value="ECO:0000318"/>
    <property type="project" value="GO_Central"/>
</dbReference>
<dbReference type="GO" id="GO:0051015">
    <property type="term" value="F:actin filament binding"/>
    <property type="evidence" value="ECO:0000318"/>
    <property type="project" value="GO_Central"/>
</dbReference>
<dbReference type="GO" id="GO:0005524">
    <property type="term" value="F:ATP binding"/>
    <property type="evidence" value="ECO:0007669"/>
    <property type="project" value="UniProtKB-KW"/>
</dbReference>
<dbReference type="GO" id="GO:0016787">
    <property type="term" value="F:hydrolase activity"/>
    <property type="evidence" value="ECO:0007669"/>
    <property type="project" value="UniProtKB-KW"/>
</dbReference>
<dbReference type="GO" id="GO:0042802">
    <property type="term" value="F:identical protein binding"/>
    <property type="evidence" value="ECO:0000353"/>
    <property type="project" value="IntAct"/>
</dbReference>
<dbReference type="GO" id="GO:0000146">
    <property type="term" value="F:microfilament motor activity"/>
    <property type="evidence" value="ECO:0000314"/>
    <property type="project" value="SGD"/>
</dbReference>
<dbReference type="GO" id="GO:0051666">
    <property type="term" value="P:actin cortical patch localization"/>
    <property type="evidence" value="ECO:0000315"/>
    <property type="project" value="SGD"/>
</dbReference>
<dbReference type="GO" id="GO:0007015">
    <property type="term" value="P:actin filament organization"/>
    <property type="evidence" value="ECO:0000318"/>
    <property type="project" value="GO_Central"/>
</dbReference>
<dbReference type="GO" id="GO:0007121">
    <property type="term" value="P:bipolar cellular bud site selection"/>
    <property type="evidence" value="ECO:0000304"/>
    <property type="project" value="SGD"/>
</dbReference>
<dbReference type="GO" id="GO:0006897">
    <property type="term" value="P:endocytosis"/>
    <property type="evidence" value="ECO:0000315"/>
    <property type="project" value="SGD"/>
</dbReference>
<dbReference type="GO" id="GO:0006887">
    <property type="term" value="P:exocytosis"/>
    <property type="evidence" value="ECO:0000304"/>
    <property type="project" value="SGD"/>
</dbReference>
<dbReference type="GO" id="GO:0031505">
    <property type="term" value="P:fungal-type cell wall organization"/>
    <property type="evidence" value="ECO:0000304"/>
    <property type="project" value="SGD"/>
</dbReference>
<dbReference type="GO" id="GO:2000601">
    <property type="term" value="P:positive regulation of Arp2/3 complex-mediated actin nucleation"/>
    <property type="evidence" value="ECO:0000314"/>
    <property type="project" value="SGD"/>
</dbReference>
<dbReference type="GO" id="GO:0006898">
    <property type="term" value="P:receptor-mediated endocytosis"/>
    <property type="evidence" value="ECO:0000315"/>
    <property type="project" value="SGD"/>
</dbReference>
<dbReference type="GO" id="GO:0006970">
    <property type="term" value="P:response to osmotic stress"/>
    <property type="evidence" value="ECO:0000304"/>
    <property type="project" value="SGD"/>
</dbReference>
<dbReference type="GO" id="GO:0009651">
    <property type="term" value="P:response to salt stress"/>
    <property type="evidence" value="ECO:0000316"/>
    <property type="project" value="SGD"/>
</dbReference>
<dbReference type="GO" id="GO:0061709">
    <property type="term" value="P:reticulophagy"/>
    <property type="evidence" value="ECO:0000315"/>
    <property type="project" value="SGD"/>
</dbReference>
<dbReference type="CDD" id="cd01378">
    <property type="entry name" value="MYSc_Myo1"/>
    <property type="match status" value="1"/>
</dbReference>
<dbReference type="CDD" id="cd11858">
    <property type="entry name" value="SH3_Myosin-I_fungi"/>
    <property type="match status" value="1"/>
</dbReference>
<dbReference type="FunFam" id="1.10.10.820:FF:000001">
    <property type="entry name" value="Myosin heavy chain"/>
    <property type="match status" value="1"/>
</dbReference>
<dbReference type="FunFam" id="1.20.120.720:FF:000015">
    <property type="entry name" value="Myosin I"/>
    <property type="match status" value="1"/>
</dbReference>
<dbReference type="FunFam" id="1.20.5.4820:FF:000004">
    <property type="entry name" value="Myosin IE"/>
    <property type="match status" value="1"/>
</dbReference>
<dbReference type="FunFam" id="1.20.58.530:FF:000007">
    <property type="entry name" value="Myosin IE"/>
    <property type="match status" value="1"/>
</dbReference>
<dbReference type="Gene3D" id="1.10.10.820">
    <property type="match status" value="1"/>
</dbReference>
<dbReference type="Gene3D" id="1.20.5.4820">
    <property type="match status" value="1"/>
</dbReference>
<dbReference type="Gene3D" id="1.20.58.530">
    <property type="match status" value="1"/>
</dbReference>
<dbReference type="Gene3D" id="3.40.850.10">
    <property type="entry name" value="Kinesin motor domain"/>
    <property type="match status" value="1"/>
</dbReference>
<dbReference type="Gene3D" id="1.20.120.720">
    <property type="entry name" value="Myosin VI head, motor domain, U50 subdomain"/>
    <property type="match status" value="1"/>
</dbReference>
<dbReference type="Gene3D" id="2.30.30.40">
    <property type="entry name" value="SH3 Domains"/>
    <property type="match status" value="1"/>
</dbReference>
<dbReference type="InterPro" id="IPR035535">
    <property type="entry name" value="Fungal_myosin-I_SH3"/>
</dbReference>
<dbReference type="InterPro" id="IPR036961">
    <property type="entry name" value="Kinesin_motor_dom_sf"/>
</dbReference>
<dbReference type="InterPro" id="IPR001609">
    <property type="entry name" value="Myosin_head_motor_dom-like"/>
</dbReference>
<dbReference type="InterPro" id="IPR010926">
    <property type="entry name" value="Myosin_TH1"/>
</dbReference>
<dbReference type="InterPro" id="IPR036072">
    <property type="entry name" value="MYSc_Myo1"/>
</dbReference>
<dbReference type="InterPro" id="IPR027417">
    <property type="entry name" value="P-loop_NTPase"/>
</dbReference>
<dbReference type="InterPro" id="IPR036028">
    <property type="entry name" value="SH3-like_dom_sf"/>
</dbReference>
<dbReference type="InterPro" id="IPR001452">
    <property type="entry name" value="SH3_domain"/>
</dbReference>
<dbReference type="PANTHER" id="PTHR13140">
    <property type="entry name" value="MYOSIN"/>
    <property type="match status" value="1"/>
</dbReference>
<dbReference type="PANTHER" id="PTHR13140:SF837">
    <property type="entry name" value="MYOSIN-3-RELATED"/>
    <property type="match status" value="1"/>
</dbReference>
<dbReference type="Pfam" id="PF00063">
    <property type="entry name" value="Myosin_head"/>
    <property type="match status" value="1"/>
</dbReference>
<dbReference type="Pfam" id="PF06017">
    <property type="entry name" value="Myosin_TH1"/>
    <property type="match status" value="1"/>
</dbReference>
<dbReference type="Pfam" id="PF00018">
    <property type="entry name" value="SH3_1"/>
    <property type="match status" value="1"/>
</dbReference>
<dbReference type="PRINTS" id="PR00193">
    <property type="entry name" value="MYOSINHEAVY"/>
</dbReference>
<dbReference type="SMART" id="SM00242">
    <property type="entry name" value="MYSc"/>
    <property type="match status" value="1"/>
</dbReference>
<dbReference type="SMART" id="SM00326">
    <property type="entry name" value="SH3"/>
    <property type="match status" value="1"/>
</dbReference>
<dbReference type="SUPFAM" id="SSF52540">
    <property type="entry name" value="P-loop containing nucleoside triphosphate hydrolases"/>
    <property type="match status" value="1"/>
</dbReference>
<dbReference type="SUPFAM" id="SSF50044">
    <property type="entry name" value="SH3-domain"/>
    <property type="match status" value="1"/>
</dbReference>
<dbReference type="PROSITE" id="PS51456">
    <property type="entry name" value="MYOSIN_MOTOR"/>
    <property type="match status" value="1"/>
</dbReference>
<dbReference type="PROSITE" id="PS50002">
    <property type="entry name" value="SH3"/>
    <property type="match status" value="1"/>
</dbReference>
<dbReference type="PROSITE" id="PS51757">
    <property type="entry name" value="TH1"/>
    <property type="match status" value="1"/>
</dbReference>
<keyword id="KW-0002">3D-structure</keyword>
<keyword id="KW-0009">Actin-binding</keyword>
<keyword id="KW-0067">ATP-binding</keyword>
<keyword id="KW-0963">Cytoplasm</keyword>
<keyword id="KW-0206">Cytoskeleton</keyword>
<keyword id="KW-0378">Hydrolase</keyword>
<keyword id="KW-0505">Motor protein</keyword>
<keyword id="KW-0518">Myosin</keyword>
<keyword id="KW-0547">Nucleotide-binding</keyword>
<keyword id="KW-0597">Phosphoprotein</keyword>
<keyword id="KW-1185">Reference proteome</keyword>
<keyword id="KW-0677">Repeat</keyword>
<keyword id="KW-0728">SH3 domain</keyword>
<feature type="chain" id="PRO_0000123492" description="Myosin-5">
    <location>
        <begin position="1"/>
        <end position="1219"/>
    </location>
</feature>
<feature type="domain" description="Myosin motor" evidence="2">
    <location>
        <begin position="36"/>
        <end position="715"/>
    </location>
</feature>
<feature type="domain" description="IQ 1">
    <location>
        <begin position="719"/>
        <end position="739"/>
    </location>
</feature>
<feature type="domain" description="IQ 2">
    <location>
        <begin position="740"/>
        <end position="765"/>
    </location>
</feature>
<feature type="domain" description="TH1" evidence="3">
    <location>
        <begin position="771"/>
        <end position="961"/>
    </location>
</feature>
<feature type="domain" description="SH3" evidence="1">
    <location>
        <begin position="1085"/>
        <end position="1147"/>
    </location>
</feature>
<feature type="region of interest" description="Disordered" evidence="4">
    <location>
        <begin position="1"/>
        <end position="20"/>
    </location>
</feature>
<feature type="region of interest" description="Actin-binding" evidence="2">
    <location>
        <begin position="588"/>
        <end position="610"/>
    </location>
</feature>
<feature type="region of interest" description="Disordered" evidence="4">
    <location>
        <begin position="951"/>
        <end position="1106"/>
    </location>
</feature>
<feature type="region of interest" description="Disordered" evidence="4">
    <location>
        <begin position="1139"/>
        <end position="1167"/>
    </location>
</feature>
<feature type="compositionally biased region" description="Basic residues" evidence="4">
    <location>
        <begin position="1"/>
        <end position="12"/>
    </location>
</feature>
<feature type="compositionally biased region" description="Polar residues" evidence="4">
    <location>
        <begin position="951"/>
        <end position="964"/>
    </location>
</feature>
<feature type="compositionally biased region" description="Low complexity" evidence="4">
    <location>
        <begin position="974"/>
        <end position="984"/>
    </location>
</feature>
<feature type="compositionally biased region" description="Polar residues" evidence="4">
    <location>
        <begin position="1030"/>
        <end position="1041"/>
    </location>
</feature>
<feature type="compositionally biased region" description="Low complexity" evidence="4">
    <location>
        <begin position="1048"/>
        <end position="1063"/>
    </location>
</feature>
<feature type="compositionally biased region" description="Pro residues" evidence="4">
    <location>
        <begin position="1072"/>
        <end position="1083"/>
    </location>
</feature>
<feature type="binding site" evidence="2">
    <location>
        <begin position="129"/>
        <end position="136"/>
    </location>
    <ligand>
        <name>ATP</name>
        <dbReference type="ChEBI" id="CHEBI:30616"/>
    </ligand>
</feature>
<feature type="modified residue" description="Phosphoserine" evidence="13 19 20 21">
    <location>
        <position position="357"/>
    </location>
</feature>
<feature type="modified residue" description="Phosphotyrosine" evidence="20">
    <location>
        <position position="359"/>
    </location>
</feature>
<feature type="modified residue" description="Phosphoserine" evidence="13">
    <location>
        <position position="777"/>
    </location>
</feature>
<feature type="modified residue" description="Phosphoserine" evidence="20">
    <location>
        <position position="992"/>
    </location>
</feature>
<feature type="modified residue" description="Phosphoserine" evidence="20 22">
    <location>
        <position position="1205"/>
    </location>
</feature>
<feature type="mutagenesis site" description="Bypasses the requirement of SHE4 for proper actin cytoskeleton polarization." evidence="11">
    <original>V</original>
    <variation>I</variation>
    <location>
        <position position="164"/>
    </location>
</feature>
<feature type="mutagenesis site" description="Bypasses the requirement of SHE4 for proper actin cytoskeleton polarization." evidence="11">
    <original>N</original>
    <variation>I</variation>
    <location>
        <position position="168"/>
    </location>
</feature>
<feature type="mutagenesis site" description="Bypasses the requirement of SHE4 for proper actin cytoskeleton polarization." evidence="11">
    <original>N</original>
    <variation>S</variation>
    <location>
        <position position="209"/>
    </location>
</feature>
<feature type="mutagenesis site" description="Leads to a depolarized actin cytoskeleton and a strong defect in the capacity to internalize STE2." evidence="13">
    <original>S</original>
    <variation>A</variation>
    <location>
        <position position="357"/>
    </location>
</feature>
<feature type="mutagenesis site" description="No growth defect, but leads to a partially depolarized actin cytoskeleton. Accelerates the constitutive internalization of STE2." evidence="13">
    <original>S</original>
    <variation>E</variation>
    <location>
        <position position="357"/>
    </location>
</feature>
<feature type="mutagenesis site" description="Bypasses the requirement of SHE4 for proper actin cytoskeleton polarization." evidence="11">
    <original>K</original>
    <variation>M</variation>
    <location>
        <position position="377"/>
    </location>
</feature>
<feature type="mutagenesis site" description="In MYO5-1; temperature sensitive loss of function." evidence="15">
    <original>E</original>
    <variation>K</variation>
    <location>
        <position position="472"/>
    </location>
</feature>
<feature type="mutagenesis site" description="Abolishes interaction with BBC1 and VRP1." evidence="7 8">
    <original>W</original>
    <variation>S</variation>
    <location>
        <position position="1123"/>
    </location>
</feature>
<feature type="strand" evidence="24">
    <location>
        <begin position="1089"/>
        <end position="1094"/>
    </location>
</feature>
<feature type="strand" evidence="24">
    <location>
        <begin position="1112"/>
        <end position="1118"/>
    </location>
</feature>
<feature type="strand" evidence="24">
    <location>
        <begin position="1122"/>
        <end position="1130"/>
    </location>
</feature>
<feature type="strand" evidence="24">
    <location>
        <begin position="1134"/>
        <end position="1138"/>
    </location>
</feature>
<feature type="helix" evidence="24">
    <location>
        <begin position="1139"/>
        <end position="1141"/>
    </location>
</feature>
<feature type="strand" evidence="23">
    <location>
        <begin position="1142"/>
        <end position="1144"/>
    </location>
</feature>
<organism>
    <name type="scientific">Saccharomyces cerevisiae (strain ATCC 204508 / S288c)</name>
    <name type="common">Baker's yeast</name>
    <dbReference type="NCBI Taxonomy" id="559292"/>
    <lineage>
        <taxon>Eukaryota</taxon>
        <taxon>Fungi</taxon>
        <taxon>Dikarya</taxon>
        <taxon>Ascomycota</taxon>
        <taxon>Saccharomycotina</taxon>
        <taxon>Saccharomycetes</taxon>
        <taxon>Saccharomycetales</taxon>
        <taxon>Saccharomycetaceae</taxon>
        <taxon>Saccharomyces</taxon>
    </lineage>
</organism>
<sequence>MAILKRGARKKVHQEPAKRSANIKKATFDSSKKKEVGVSDLTLLSKISDEAINENLKKRFLNATIYTYIGHVLISVNPFRDLGIYTDAVMNEYKGKNRLEVPPHVFAIAESMYYNMKSYNENQCVIISGESGAGKTEAAKRIMQYIAAASSTHTESIGKIKDMVLATNPLLESFGCAKTLRNNNSSRHGKYLEIKFNNQFEPCAGNITNYLLEKQRVVSQIKNERNFHIFYQFTKGASDAYRQTFGVQKPEQYVYTAAAGCISAETIDDLQDYQETLKAMRVIGLGQEEQDQIFRMLAAILWIGNVSFIENEEGNAQVRDTSVTDFVAYLLQIDSQLLIKSLVERIMETNHGMKRGSVYHVPLNIVQADAVRDALAKAIYNNLFDWIVSRVNKSLQAFPGAEKSIGILDIYGFEIFEHNSFEQICINYVNEKLQQIFIQLTLKSEQETYEREKIQWTPIKYFDNKVVCDLIEARRPPGIFAAMNDSVATAHADSNAADQAFAQRLNLFTTNPHFDLRSNKFVIKHYAGDVTYDIDGITDKNKDQLQKDLVELIGTTTNTFLATIFPDTVDRESKRRPPTAGDKIIKSANDLVETLSKAQPSYIRTIKPNETKSPNDYDDRQVLHQIKYLGLQENVRIRRAGFAYRQVFEKFVERFYLLSPHCSYAGDYTWQGDTLDAVKYILQDSSIPQQEYQLGVTSVFIKTPETLFALEHMRDRYWHNMAARIQRAWRRFLQRRIDAATKIQRTIRERKEGNKYEKLRDYGTKVLGGRKERRSMSLLGYRAFMGDYLSCNESKSKGAYIKRQVSIKEKVIFSIHGEALHTKFGRSAQRLKKTFLLTPTTLYIVGQTLVQNAMTYTQDYKIDVRNIQAVSLTNLQDDWVAIKLASSGQPDPLINTYFKTELITHLKRLNDKIQIKIGSAIEYQKKPGKLHSVKCQINESAPKYGDIYKSSTISVRRGNPPNSQVHKKPRKKSSISSGYHASSSQATRRPVSIAAAQHVPTAPASRHSKKPAPPPPGMQNKAATRRSVPNPASTLTASQSNARPSPPTAATRATPAATPAAAAMGSGRQANIPPPPPPPPPSSKPKEPMFEAAYDFPGSGSPSELPLKKGDVIYITREEPSGWSLGKLLDGSKEGWVPTAYMKPHSGNNNIPTPPQNRDVPKPVLNSVQHDNTSANVIPAAAQASLGDGLANALAARANKMRLESDDEEANEDEEEDDW</sequence>
<comment type="function">
    <text evidence="5 6 7 10 11 13 15 16 17">One of two redundant type-I myosins implicated in the organization of the actin cytoskeleton. Required for proper actin cytoskeleton polarization and for the internalization step in endocytosis. At the cell cortex, assembles in patch-like structures together with proteins from the actin-polymerizing machinery and promotes actin assembly. Functions redundantly with LAS17 as actin nucleation-promoting factor (NPF) for the Arp2/3 complex. Motor domain phosphorylation by PAK kinases CLA4 and STE20 promotes CDC42-regulated actin assembly. Functions together with the NPF PAN1 in late stages of endocytosis. Motor domain phosphorylation by PDK1 kinases PKH1 and PKH2, and by SGK kinases YPK1 and YPK2, promotes ligand-induced, but not constitutive endocytosis of the G protein-coupled receptor STE2.</text>
</comment>
<comment type="subunit">
    <text evidence="5 6 7 8 9 10 11 13 14 17">Interacts (via myosin motor domain) with SHE4; this interaction is important for proper localization and may regulate the interaction of the motor domain with actin. Interacts (via SH3 domain) with VRP1; this interaction is required for localization to sites of polarized growth and may regulate the interaction of the tail domain with actin. Interacts (via SH3 domain) with PAN1; this interaction is important for late stages of endocytopsis. Interacts (via SH3 domain) with BBC1 and LAS17. Interacts (via C-terminal acidic tail) with ARC19 and ARC40; ARC19 and ARC40 are Arp2/3 complex subunits. Interacts with BZZ1, PKH1, PKH2, YPK1 and YPK2.</text>
</comment>
<comment type="interaction">
    <interactant intactId="EBI-11687">
        <id>Q04439</id>
    </interactant>
    <interactant intactId="EBI-25376">
        <id>P40563</id>
        <label>AIM21</label>
    </interactant>
    <organismsDiffer>false</organismsDiffer>
    <experiments>2</experiments>
</comment>
<comment type="interaction">
    <interactant intactId="EBI-11687">
        <id>Q04439</id>
    </interactant>
    <interactant intactId="EBI-28798">
        <id>P53933</id>
        <label>APP1</label>
    </interactant>
    <organismsDiffer>false</organismsDiffer>
    <experiments>2</experiments>
</comment>
<comment type="interaction">
    <interactant intactId="EBI-11687">
        <id>Q04439</id>
    </interactant>
    <interactant intactId="EBI-2764">
        <id>Q05933</id>
        <label>ARC18</label>
    </interactant>
    <organismsDiffer>false</organismsDiffer>
    <experiments>3</experiments>
</comment>
<comment type="interaction">
    <interactant intactId="EBI-11687">
        <id>Q04439</id>
    </interactant>
    <interactant intactId="EBI-2757">
        <id>P33204</id>
        <label>ARC19</label>
    </interactant>
    <organismsDiffer>false</organismsDiffer>
    <experiments>3</experiments>
</comment>
<comment type="interaction">
    <interactant intactId="EBI-11687">
        <id>Q04439</id>
    </interactant>
    <interactant intactId="EBI-2777">
        <id>P38328</id>
        <label>ARC40</label>
    </interactant>
    <organismsDiffer>false</organismsDiffer>
    <experiments>4</experiments>
</comment>
<comment type="interaction">
    <interactant intactId="EBI-11687">
        <id>Q04439</id>
    </interactant>
    <interactant intactId="EBI-3437">
        <id>P47068</id>
        <label>BBC1</label>
    </interactant>
    <organismsDiffer>false</organismsDiffer>
    <experiments>6</experiments>
</comment>
<comment type="interaction">
    <interactant intactId="EBI-11687">
        <id>Q04439</id>
    </interactant>
    <interactant intactId="EBI-3470">
        <id>Q01389</id>
        <label>BCK1</label>
    </interactant>
    <organismsDiffer>false</organismsDiffer>
    <experiments>6</experiments>
</comment>
<comment type="interaction">
    <interactant intactId="EBI-11687">
        <id>Q04439</id>
    </interactant>
    <interactant intactId="EBI-3711">
        <id>P40450</id>
        <label>BNR1</label>
    </interactant>
    <organismsDiffer>false</organismsDiffer>
    <experiments>7</experiments>
</comment>
<comment type="interaction">
    <interactant intactId="EBI-11687">
        <id>Q04439</id>
    </interactant>
    <interactant intactId="EBI-3889">
        <id>P38822</id>
        <label>BZZ1</label>
    </interactant>
    <organismsDiffer>false</organismsDiffer>
    <experiments>5</experiments>
</comment>
<comment type="interaction">
    <interactant intactId="EBI-11687">
        <id>Q04439</id>
    </interactant>
    <interactant intactId="EBI-1942">
        <id>Q00362</id>
        <label>CDC55</label>
    </interactant>
    <organismsDiffer>false</organismsDiffer>
    <experiments>4</experiments>
</comment>
<comment type="interaction">
    <interactant intactId="EBI-11687">
        <id>Q04439</id>
    </interactant>
    <interactant intactId="EBI-4750">
        <id>P48562</id>
        <label>CLA4</label>
    </interactant>
    <organismsDiffer>false</organismsDiffer>
    <experiments>3</experiments>
</comment>
<comment type="interaction">
    <interactant intactId="EBI-11687">
        <id>Q04439</id>
    </interactant>
    <interactant intactId="EBI-3976">
        <id>P06787</id>
        <label>CMD1</label>
    </interactant>
    <organismsDiffer>false</organismsDiffer>
    <experiments>9</experiments>
</comment>
<comment type="interaction">
    <interactant intactId="EBI-11687">
        <id>Q04439</id>
    </interactant>
    <interactant intactId="EBI-10022">
        <id>Q12446</id>
        <label>LAS17</label>
    </interactant>
    <organismsDiffer>false</organismsDiffer>
    <experiments>7</experiments>
</comment>
<comment type="interaction">
    <interactant intactId="EBI-11687">
        <id>Q04439</id>
    </interactant>
    <interactant intactId="EBI-11687">
        <id>Q04439</id>
        <label>MYO5</label>
    </interactant>
    <organismsDiffer>false</organismsDiffer>
    <experiments>7</experiments>
</comment>
<comment type="interaction">
    <interactant intactId="EBI-11687">
        <id>Q04439</id>
    </interactant>
    <interactant intactId="EBI-12621">
        <id>Q12451</id>
        <label>OSH2</label>
    </interactant>
    <organismsDiffer>false</organismsDiffer>
    <experiments>6</experiments>
</comment>
<comment type="interaction">
    <interactant intactId="EBI-11687">
        <id>Q04439</id>
    </interactant>
    <interactant intactId="EBI-12875">
        <id>P32521</id>
        <label>PAN1</label>
    </interactant>
    <organismsDiffer>false</organismsDiffer>
    <experiments>2</experiments>
</comment>
<comment type="interaction">
    <interactant intactId="EBI-11687">
        <id>Q04439</id>
    </interactant>
    <interactant intactId="EBI-37683">
        <id>Q03306</id>
        <label>PKH3</label>
    </interactant>
    <organismsDiffer>false</organismsDiffer>
    <experiments>2</experiments>
</comment>
<comment type="interaction">
    <interactant intactId="EBI-11687">
        <id>Q04439</id>
    </interactant>
    <interactant intactId="EBI-465">
        <id>P33334</id>
        <label>PRP8</label>
    </interactant>
    <organismsDiffer>false</organismsDiffer>
    <experiments>4</experiments>
</comment>
<comment type="interaction">
    <interactant intactId="EBI-11687">
        <id>Q04439</id>
    </interactant>
    <interactant intactId="EBI-14500">
        <id>P39743</id>
        <label>RVS167</label>
    </interactant>
    <organismsDiffer>false</organismsDiffer>
    <experiments>3</experiments>
</comment>
<comment type="interaction">
    <interactant intactId="EBI-11687">
        <id>Q04439</id>
    </interactant>
    <interactant intactId="EBI-16463">
        <id>P39955</id>
        <label>SAP1</label>
    </interactant>
    <organismsDiffer>false</organismsDiffer>
    <experiments>4</experiments>
</comment>
<comment type="interaction">
    <interactant intactId="EBI-11687">
        <id>Q04439</id>
    </interactant>
    <interactant intactId="EBI-17313">
        <id>P32790</id>
        <label>SLA1</label>
    </interactant>
    <organismsDiffer>false</organismsDiffer>
    <experiments>3</experiments>
</comment>
<comment type="interaction">
    <interactant intactId="EBI-11687">
        <id>Q04439</id>
    </interactant>
    <interactant intactId="EBI-18285">
        <id>Q03497</id>
        <label>STE20</label>
    </interactant>
    <organismsDiffer>false</organismsDiffer>
    <experiments>4</experiments>
</comment>
<comment type="interaction">
    <interactant intactId="EBI-11687">
        <id>Q04439</id>
    </interactant>
    <interactant intactId="EBI-19857">
        <id>P40453</id>
        <label>UBP7</label>
    </interactant>
    <organismsDiffer>false</organismsDiffer>
    <experiments>4</experiments>
</comment>
<comment type="interaction">
    <interactant intactId="EBI-11687">
        <id>Q04439</id>
    </interactant>
    <interactant intactId="EBI-20502">
        <id>P37370</id>
        <label>VRP1</label>
    </interactant>
    <organismsDiffer>false</organismsDiffer>
    <experiments>20</experiments>
</comment>
<comment type="interaction">
    <interactant intactId="EBI-11687">
        <id>Q04439</id>
    </interactant>
    <interactant intactId="EBI-38289">
        <id>Q08912</id>
        <label>YOR389W</label>
    </interactant>
    <organismsDiffer>false</organismsDiffer>
    <experiments>2</experiments>
</comment>
<comment type="interaction">
    <interactant intactId="EBI-11687">
        <id>Q04439</id>
    </interactant>
    <interactant intactId="EBI-22484">
        <id>P40021</id>
        <label>ZRG8</label>
    </interactant>
    <organismsDiffer>false</organismsDiffer>
    <experiments>2</experiments>
</comment>
<comment type="subcellular location">
    <subcellularLocation>
        <location evidence="13 14 16 17">Cytoplasm</location>
        <location evidence="13 14 16 17">Cytoskeleton</location>
        <location evidence="13 14 16 17">Actin patch</location>
    </subcellularLocation>
    <text>Localizes to cortical patch-like protein structures that assemble actin patches. Enriched at sites of polarized growth.</text>
</comment>
<comment type="domain">
    <text>The myosin motor domain displays actin-stimulated ATPase activity and generates a mechanochemical force.</text>
</comment>
<comment type="domain">
    <text>The tail domain participates in molecular interactions that specify the role of the motor domain. It is composed of several tail homology (TH) domains, namely a putative phospholipid-binding myosin tail domain (also named TH1), an Ala- and Pro-rich domain (TH2), followed by an SH3 domain and a C-terminal acidic domain (TH3).</text>
</comment>
<comment type="PTM">
    <text evidence="13">Phosphorylation of the TEDS site (Ser-357) is required for the polarization of the actin cytoskeleton and for ligand-induced, but not for constitutive internalization of STE2. Phosphorylation probably activates the myosin-I ATPase activity. Ser-357 is phosphorylated by YPK2 in vitro.</text>
</comment>
<comment type="miscellaneous">
    <text evidence="12">Present with 2280 molecules/cell in log phase SD medium.</text>
</comment>
<comment type="similarity">
    <text evidence="18">Belongs to the TRAFAC class myosin-kinesin ATPase superfamily. Myosin family.</text>
</comment>
<reference key="1">
    <citation type="journal article" date="1996" name="J. Cell Biol.">
        <title>Synthetic lethality screen identifies a novel yeast myosin I gene (MYO5): myosin I proteins are required for polarization of the actin cytoskeleton.</title>
        <authorList>
            <person name="Goodson H.V."/>
            <person name="Anderson B.L."/>
            <person name="Warrick H.M."/>
            <person name="Pon L.A."/>
            <person name="Spudich J.A."/>
        </authorList>
    </citation>
    <scope>NUCLEOTIDE SEQUENCE [GENOMIC DNA]</scope>
    <scope>FUNCTION</scope>
    <scope>SUBCELLULAR LOCATION</scope>
</reference>
<reference key="2">
    <citation type="journal article" date="1997" name="Nature">
        <title>The nucleotide sequence of Saccharomyces cerevisiae chromosome XIII.</title>
        <authorList>
            <person name="Bowman S."/>
            <person name="Churcher C.M."/>
            <person name="Badcock K."/>
            <person name="Brown D."/>
            <person name="Chillingworth T."/>
            <person name="Connor R."/>
            <person name="Dedman K."/>
            <person name="Devlin K."/>
            <person name="Gentles S."/>
            <person name="Hamlin N."/>
            <person name="Hunt S."/>
            <person name="Jagels K."/>
            <person name="Lye G."/>
            <person name="Moule S."/>
            <person name="Odell C."/>
            <person name="Pearson D."/>
            <person name="Rajandream M.A."/>
            <person name="Rice P."/>
            <person name="Skelton J."/>
            <person name="Walsh S.V."/>
            <person name="Whitehead S."/>
            <person name="Barrell B.G."/>
        </authorList>
    </citation>
    <scope>NUCLEOTIDE SEQUENCE [LARGE SCALE GENOMIC DNA]</scope>
    <source>
        <strain>ATCC 204508 / S288c</strain>
    </source>
</reference>
<reference key="3">
    <citation type="journal article" date="2014" name="G3 (Bethesda)">
        <title>The reference genome sequence of Saccharomyces cerevisiae: Then and now.</title>
        <authorList>
            <person name="Engel S.R."/>
            <person name="Dietrich F.S."/>
            <person name="Fisk D.G."/>
            <person name="Binkley G."/>
            <person name="Balakrishnan R."/>
            <person name="Costanzo M.C."/>
            <person name="Dwight S.S."/>
            <person name="Hitz B.C."/>
            <person name="Karra K."/>
            <person name="Nash R.S."/>
            <person name="Weng S."/>
            <person name="Wong E.D."/>
            <person name="Lloyd P."/>
            <person name="Skrzypek M.S."/>
            <person name="Miyasato S.R."/>
            <person name="Simison M."/>
            <person name="Cherry J.M."/>
        </authorList>
    </citation>
    <scope>GENOME REANNOTATION</scope>
    <source>
        <strain>ATCC 204508 / S288c</strain>
    </source>
</reference>
<reference key="4">
    <citation type="journal article" date="1996" name="Science">
        <title>Role of type I myosins in receptor-mediated endocytosis in yeast.</title>
        <authorList>
            <person name="Geli M.I."/>
            <person name="Riezman H."/>
        </authorList>
    </citation>
    <scope>FUNCTION IN RECEPTOR ENDOCYTOSIS</scope>
    <scope>MUTAGENESIS OF GLU-472</scope>
</reference>
<reference key="5">
    <citation type="journal article" date="1998" name="J. Cell Biol.">
        <title>The Src homology domain 3 (SH3) of a yeast type I myosin, Myo5p, binds to verprolin and is required for targeting to sites of actin polarization.</title>
        <authorList>
            <person name="Anderson B.L."/>
            <person name="Boldogh I."/>
            <person name="Evangelista M."/>
            <person name="Boone C."/>
            <person name="Greene L.A."/>
            <person name="Pon L.A."/>
        </authorList>
    </citation>
    <scope>FUNCTION</scope>
    <scope>INTERACTION WITH VRP1</scope>
    <scope>SUBCELLULAR LOCATION</scope>
</reference>
<reference key="6">
    <citation type="journal article" date="2000" name="EMBO J.">
        <title>An intact SH3 domain is required for myosin I-induced actin polymerization.</title>
        <authorList>
            <person name="Geli M.I."/>
            <person name="Lombardi R."/>
            <person name="Schmelzl B."/>
            <person name="Riezman H."/>
        </authorList>
    </citation>
    <scope>FUNCTION</scope>
    <scope>INTERACTION WITH VRP1</scope>
    <scope>MUTAGENESIS OF TRP-1123</scope>
</reference>
<reference key="7">
    <citation type="journal article" date="2000" name="J. Cell Biol.">
        <title>A role for myosin-I in actin assembly through interactions with Vrp1p, Bee1p, and the Arp2/3 complex.</title>
        <authorList>
            <person name="Evangelista M."/>
            <person name="Klebl B.M."/>
            <person name="Tong A.H.Y."/>
            <person name="Webb B.A."/>
            <person name="Leeuw T."/>
            <person name="Leberer E."/>
            <person name="Whiteway M."/>
            <person name="Thomas D.Y."/>
            <person name="Boone C."/>
        </authorList>
    </citation>
    <scope>FUNCTION</scope>
    <scope>INTERACTION WITH ARC19 AND ARC40</scope>
</reference>
<reference key="8">
    <citation type="journal article" date="2000" name="J. Cell Biol.">
        <title>Direct involvement of yeast type I myosins in Cdc42-dependent actin polymerization.</title>
        <authorList>
            <person name="Lechler T."/>
            <person name="Shevchenko A."/>
            <person name="Li R."/>
        </authorList>
    </citation>
    <scope>FUNCTION</scope>
    <scope>INTERACTION WITH LAS17</scope>
</reference>
<reference key="9">
    <citation type="journal article" date="2002" name="Genetics">
        <title>The novel adaptor protein, Mti1p, and Vrp1p, a homolog of Wiskott-Aldrich syndrome protein-interacting protein (WIP), may antagonistically regulate type I myosins in Saccharomyces cerevisiae.</title>
        <authorList>
            <person name="Mochida J."/>
            <person name="Yamamoto T."/>
            <person name="Fujimura-Kamada K."/>
            <person name="Tanaka K."/>
        </authorList>
    </citation>
    <scope>INTERACTION WITH BBC1</scope>
    <scope>MUTAGENESIS OF TRP-1123</scope>
</reference>
<reference key="10">
    <citation type="journal article" date="2002" name="Mol. Cell. Biol.">
        <title>Saccharomyces cerevisiae Bzz1p is implicated with type I myosins in actin patch polarization and is able to recruit actin-polymerizing machinery in vitro.</title>
        <authorList>
            <person name="Soulard A."/>
            <person name="Lechler T."/>
            <person name="Spiridonov V."/>
            <person name="Shevchenko A."/>
            <person name="Shevchenko A."/>
            <person name="Li R."/>
            <person name="Winsor B."/>
        </authorList>
    </citation>
    <scope>INTERACTION WITH BZZ1</scope>
</reference>
<reference key="11">
    <citation type="journal article" date="2003" name="Curr. Biol.">
        <title>The UCS domain protein She4p binds to myosin motor domains and is essential for class I and class V myosin function.</title>
        <authorList>
            <person name="Wesche S."/>
            <person name="Arnold M."/>
            <person name="Jansen R.-P."/>
        </authorList>
    </citation>
    <scope>FUNCTION</scope>
    <scope>INTERACTION WITH SHE4</scope>
</reference>
<reference key="12">
    <citation type="journal article" date="2003" name="Mol. Biol. Cell">
        <title>She4p/Dim1p interacts with the motor domain of unconventional myosins in the budding yeast, Saccharomyces cerevisiae.</title>
        <authorList>
            <person name="Toi H."/>
            <person name="Fujimura-Kamada K."/>
            <person name="Irie K."/>
            <person name="Takai Y."/>
            <person name="Todo S."/>
            <person name="Tanaka K."/>
        </authorList>
    </citation>
    <scope>FUNCTION</scope>
    <scope>INTERACTION WITH SHE4</scope>
    <scope>MUTAGENESIS OF VAL-164; ASN-168; ASN-209 AND LYS-377</scope>
</reference>
<reference key="13">
    <citation type="journal article" date="2003" name="Nature">
        <title>Global analysis of protein expression in yeast.</title>
        <authorList>
            <person name="Ghaemmaghami S."/>
            <person name="Huh W.-K."/>
            <person name="Bower K."/>
            <person name="Howson R.W."/>
            <person name="Belle A."/>
            <person name="Dephoure N."/>
            <person name="O'Shea E.K."/>
            <person name="Weissman J.S."/>
        </authorList>
    </citation>
    <scope>LEVEL OF PROTEIN EXPRESSION [LARGE SCALE ANALYSIS]</scope>
</reference>
<reference key="14">
    <citation type="journal article" date="2006" name="J. Biol. Chem.">
        <title>TEDS site phosphorylation of the yeast myosins I is required for ligand-induced but not for constitutive endocytosis of the G protein-coupled receptor Ste2p.</title>
        <authorList>
            <person name="Grosshans B.L."/>
            <person name="Groetsch H."/>
            <person name="Mukhopadhyay D."/>
            <person name="Fernandez I.M."/>
            <person name="Pfannstiel J."/>
            <person name="Idrissi F.-Z."/>
            <person name="Lechner J."/>
            <person name="Riezman H."/>
            <person name="Geli M.I."/>
        </authorList>
    </citation>
    <scope>FUNCTION</scope>
    <scope>PHOSPHORYLATION AT SER-357 AND SER-777</scope>
    <scope>IDENTIFICATION BY MASS SPECTROMETRY</scope>
    <scope>MUTAGENESIS OF SER-357</scope>
    <scope>SUBCELLULAR LOCATION</scope>
    <scope>INTERACTION WITH PKH1; PKH2; YPK1 AND YPK2</scope>
</reference>
<reference key="15">
    <citation type="journal article" date="2007" name="J. Proteome Res.">
        <title>Large-scale phosphorylation analysis of alpha-factor-arrested Saccharomyces cerevisiae.</title>
        <authorList>
            <person name="Li X."/>
            <person name="Gerber S.A."/>
            <person name="Rudner A.D."/>
            <person name="Beausoleil S.A."/>
            <person name="Haas W."/>
            <person name="Villen J."/>
            <person name="Elias J.E."/>
            <person name="Gygi S.P."/>
        </authorList>
    </citation>
    <scope>PHOSPHORYLATION [LARGE SCALE ANALYSIS] AT SER-357; TYR-359; SER-992 AND SER-1205</scope>
    <scope>IDENTIFICATION BY MASS SPECTROMETRY [LARGE SCALE ANALYSIS]</scope>
    <source>
        <strain>ADR376</strain>
    </source>
</reference>
<reference key="16">
    <citation type="journal article" date="2007" name="Mol. Biol. Cell">
        <title>Interaction of the endocytic scaffold protein Pan1 with the type I myosins contributes to the late stages of endocytosis.</title>
        <authorList>
            <person name="Barker S.L."/>
            <person name="Lee L."/>
            <person name="Pierce B.D."/>
            <person name="Maldonado-Baez L."/>
            <person name="Drubin D.G."/>
            <person name="Wendland B."/>
        </authorList>
    </citation>
    <scope>INTERACTION WITH PAN1</scope>
    <scope>SUBCELLULAR LOCATION</scope>
</reference>
<reference key="17">
    <citation type="journal article" date="2007" name="Proc. Natl. Acad. Sci. U.S.A.">
        <title>Analysis of phosphorylation sites on proteins from Saccharomyces cerevisiae by electron transfer dissociation (ETD) mass spectrometry.</title>
        <authorList>
            <person name="Chi A."/>
            <person name="Huttenhower C."/>
            <person name="Geer L.Y."/>
            <person name="Coon J.J."/>
            <person name="Syka J.E.P."/>
            <person name="Bai D.L."/>
            <person name="Shabanowitz J."/>
            <person name="Burke D.J."/>
            <person name="Troyanskaya O.G."/>
            <person name="Hunt D.F."/>
        </authorList>
    </citation>
    <scope>PHOSPHORYLATION [LARGE SCALE ANALYSIS] AT SER-357</scope>
    <scope>IDENTIFICATION BY MASS SPECTROMETRY [LARGE SCALE ANALYSIS]</scope>
</reference>
<reference key="18">
    <citation type="journal article" date="2008" name="Mol. Cell. Proteomics">
        <title>A multidimensional chromatography technology for in-depth phosphoproteome analysis.</title>
        <authorList>
            <person name="Albuquerque C.P."/>
            <person name="Smolka M.B."/>
            <person name="Payne S.H."/>
            <person name="Bafna V."/>
            <person name="Eng J."/>
            <person name="Zhou H."/>
        </authorList>
    </citation>
    <scope>PHOSPHORYLATION [LARGE SCALE ANALYSIS] AT SER-357</scope>
    <scope>IDENTIFICATION BY MASS SPECTROMETRY [LARGE SCALE ANALYSIS]</scope>
</reference>
<reference key="19">
    <citation type="journal article" date="2009" name="Science">
        <title>Global analysis of Cdk1 substrate phosphorylation sites provides insights into evolution.</title>
        <authorList>
            <person name="Holt L.J."/>
            <person name="Tuch B.B."/>
            <person name="Villen J."/>
            <person name="Johnson A.D."/>
            <person name="Gygi S.P."/>
            <person name="Morgan D.O."/>
        </authorList>
    </citation>
    <scope>PHOSPHORYLATION [LARGE SCALE ANALYSIS] AT SER-1205</scope>
    <scope>IDENTIFICATION BY MASS SPECTROMETRY [LARGE SCALE ANALYSIS]</scope>
</reference>
<reference key="20">
    <citation type="submission" date="2006-01" db="PDB data bank">
        <title>Yeast Myo5 SH3 domain, tetragonal crystal form.</title>
        <authorList>
            <person name="Gonfloni S."/>
            <person name="Kursula P."/>
            <person name="Sacco R."/>
            <person name="Cesareni G."/>
            <person name="Wilmanns M."/>
        </authorList>
    </citation>
    <scope>X-RAY CRYSTALLOGRAPHY (1.68 ANGSTROMS) OF 1088-1145</scope>
</reference>
<reference key="21">
    <citation type="submission" date="2006-10" db="PDB data bank">
        <title>High-resolution structure of yeast Myo5 SH3 domain.</title>
        <authorList>
            <person name="Wilmanns M."/>
            <person name="Kursula P."/>
            <person name="Gonfloni S."/>
            <person name="Ferracuti S."/>
            <person name="Cesareni G."/>
        </authorList>
    </citation>
    <scope>X-RAY CRYSTALLOGRAPHY (1.39 ANGSTROMS) OF 1088-1145</scope>
</reference>
<protein>
    <recommendedName>
        <fullName>Myosin-5</fullName>
    </recommendedName>
    <alternativeName>
        <fullName>Actin-dependent myosin-I MYO5</fullName>
    </alternativeName>
    <alternativeName>
        <fullName>Class I unconventional myosin MYO5</fullName>
    </alternativeName>
    <alternativeName>
        <fullName>Type I myosin MYO5</fullName>
    </alternativeName>
</protein>
<accession>Q04439</accession>
<accession>D6VZT2</accession>
<evidence type="ECO:0000255" key="1">
    <source>
        <dbReference type="PROSITE-ProRule" id="PRU00192"/>
    </source>
</evidence>
<evidence type="ECO:0000255" key="2">
    <source>
        <dbReference type="PROSITE-ProRule" id="PRU00782"/>
    </source>
</evidence>
<evidence type="ECO:0000255" key="3">
    <source>
        <dbReference type="PROSITE-ProRule" id="PRU01093"/>
    </source>
</evidence>
<evidence type="ECO:0000256" key="4">
    <source>
        <dbReference type="SAM" id="MobiDB-lite"/>
    </source>
</evidence>
<evidence type="ECO:0000269" key="5">
    <source>
    </source>
</evidence>
<evidence type="ECO:0000269" key="6">
    <source>
    </source>
</evidence>
<evidence type="ECO:0000269" key="7">
    <source>
    </source>
</evidence>
<evidence type="ECO:0000269" key="8">
    <source>
    </source>
</evidence>
<evidence type="ECO:0000269" key="9">
    <source>
    </source>
</evidence>
<evidence type="ECO:0000269" key="10">
    <source>
    </source>
</evidence>
<evidence type="ECO:0000269" key="11">
    <source>
    </source>
</evidence>
<evidence type="ECO:0000269" key="12">
    <source>
    </source>
</evidence>
<evidence type="ECO:0000269" key="13">
    <source>
    </source>
</evidence>
<evidence type="ECO:0000269" key="14">
    <source>
    </source>
</evidence>
<evidence type="ECO:0000269" key="15">
    <source>
    </source>
</evidence>
<evidence type="ECO:0000269" key="16">
    <source>
    </source>
</evidence>
<evidence type="ECO:0000269" key="17">
    <source>
    </source>
</evidence>
<evidence type="ECO:0000305" key="18"/>
<evidence type="ECO:0007744" key="19">
    <source>
    </source>
</evidence>
<evidence type="ECO:0007744" key="20">
    <source>
    </source>
</evidence>
<evidence type="ECO:0007744" key="21">
    <source>
    </source>
</evidence>
<evidence type="ECO:0007744" key="22">
    <source>
    </source>
</evidence>
<evidence type="ECO:0007829" key="23">
    <source>
        <dbReference type="PDB" id="1YP5"/>
    </source>
</evidence>
<evidence type="ECO:0007829" key="24">
    <source>
        <dbReference type="PDB" id="1ZUY"/>
    </source>
</evidence>
<name>MYO5_YEAST</name>
<gene>
    <name type="primary">MYO5</name>
    <name type="ordered locus">YMR109W</name>
    <name type="ORF">YM9718.08</name>
</gene>
<proteinExistence type="evidence at protein level"/>